<proteinExistence type="evidence at transcript level"/>
<organism>
    <name type="scientific">Tyto alba</name>
    <name type="common">Barn owl</name>
    <dbReference type="NCBI Taxonomy" id="56313"/>
    <lineage>
        <taxon>Eukaryota</taxon>
        <taxon>Metazoa</taxon>
        <taxon>Chordata</taxon>
        <taxon>Craniata</taxon>
        <taxon>Vertebrata</taxon>
        <taxon>Euteleostomi</taxon>
        <taxon>Archelosauria</taxon>
        <taxon>Archosauria</taxon>
        <taxon>Dinosauria</taxon>
        <taxon>Saurischia</taxon>
        <taxon>Theropoda</taxon>
        <taxon>Coelurosauria</taxon>
        <taxon>Aves</taxon>
        <taxon>Neognathae</taxon>
        <taxon>Neoaves</taxon>
        <taxon>Telluraves</taxon>
        <taxon>Strigiformes</taxon>
        <taxon>Tytonidae</taxon>
        <taxon>Tyto</taxon>
    </lineage>
</organism>
<keyword id="KW-0010">Activator</keyword>
<keyword id="KW-0090">Biological rhythms</keyword>
<keyword id="KW-0963">Cytoplasm</keyword>
<keyword id="KW-0227">DNA damage</keyword>
<keyword id="KW-0238">DNA-binding</keyword>
<keyword id="KW-1017">Isopeptide bond</keyword>
<keyword id="KW-0539">Nucleus</keyword>
<keyword id="KW-0597">Phosphoprotein</keyword>
<keyword id="KW-0677">Repeat</keyword>
<keyword id="KW-0804">Transcription</keyword>
<keyword id="KW-0805">Transcription regulation</keyword>
<keyword id="KW-0832">Ubl conjugation</keyword>
<comment type="function">
    <text evidence="2 3">Transcriptional activator which forms a core component of the circadian clock. The circadian clock, an internal time-keeping system, regulates various physiological processes through the generation of approximately 24 hour circadian rhythms in gene expression, which are translated into rhythms in metabolism and behavior. It is derived from the Latin roots 'circa' (about) and 'diem' (day) and acts as an important regulator of a wide array of physiological functions including metabolism, sleep, body temperature, blood pressure, endocrine, immune, cardiovascular, and renal function. Consists of two major components: the central clock, residing in the suprachiasmatic nucleus (SCN) of the brain, and the peripheral clocks that are present in nearly every tissue and organ system. Both the central and peripheral clocks can be reset by environmental cues, also known as Zeitgebers (German for 'timegivers'). The predominant Zeitgeber for the central clock is light, which is sensed by retina and signals directly to the SCN. The central clock entrains the peripheral clocks through neuronal and hormonal signals, body temperature and feeding-related cues, aligning all clocks with the external light/dark cycle. Circadian rhythms allow an organism to achieve temporal homeostasis with its environment at the molecular level by regulating gene expression to create a peak of protein expression once every 24 hours to control when a particular physiological process is most active with respect to the solar day. Transcription and translation of core clock components (CLOCK, NPAS2, BMAL1, BMAL2, PER1, PER2, PER3, CRY1 and CRY2) plays a critical role in rhythm generation, whereas delays imposed by post-translational modifications (PTMs) are important for determining the period (tau) of the rhythms (tau refers to the period of a rhythm and is the length, in time, of one complete cycle). A diurnal rhythm is synchronized with the day/night cycle, while the ultradian and infradian rhythms have a period shorter and longer than 24 hours, respectively. Disruptions in the circadian rhythms contribute to the pathology of cardiovascular diseases, cancer, metabolic syndromes and aging. A transcription/translation feedback loop (TTFL) forms the core of the molecular circadian clock mechanism. Transcription factors, CLOCK or NPAS2 and BMAL1 or BMAL2, form the positive limb of the feedback loop, act in the form of a heterodimer and activate the transcription of core clock genes and clock-controlled genes (involved in key metabolic processes), harboring E-box elements (5'-CACGTG-3') within their promoters. The core clock genes: PER1/2/3 and CRY1/2 which are transcriptional repressors form the negative limb of the feedback loop and interact with the CLOCK|NPAS2-BMAL1|BMAL2 heterodimer inhibiting its activity and thereby negatively regulating their own expression. This heterodimer also activates nuclear receptors NR1D1/2 and RORA/B/G, which form a second feedback loop and which activate and repress BMAL1 transcription, respectively. The preferred binding motif for the CLOCK-BMAL1 heterodimer is 5'-CACGTGA-3', which contains a flanking adenine nucleotide at the 3-prime end of the canonical 6-nucleotide E-box sequence. CLOCK specifically binds to the half-site 5'-CAC-3', while BMAL1 binds to the half-site 5'-GTGA-3'.</text>
</comment>
<comment type="subunit">
    <text evidence="2">Component of the circadian clock oscillator which includes the CRY proteins, CLOCK or NPAS2, BMAL1 or BMAL2, CSNK1D and/or CSNK1E, TIMELESS and the PER proteins. Forms a heterodimer with BMAL1. The CLOCK-BMAL1 heterodimer is required for E-box-dependent transactivation, for CLOCK nuclear translocation and degradation, and for phosphorylation of both CLOCK and BMAL1. Interaction with PER and CRY proteins requires translocation to the nucleus. Interaction of the CLOCK-BMAL1 heterodimer with PER or CRY inhibits transcription activation.</text>
</comment>
<comment type="subcellular location">
    <subcellularLocation>
        <location evidence="2">Cytoplasm</location>
    </subcellularLocation>
    <subcellularLocation>
        <location evidence="5">Nucleus</location>
    </subcellularLocation>
    <subcellularLocation>
        <location evidence="3">Cytoplasm</location>
        <location evidence="3">Cytosol</location>
    </subcellularLocation>
    <text evidence="2">Shuttling between the cytoplasm and the nucleus is under circadian regulation and is BMAL1-dependent.</text>
</comment>
<comment type="PTM">
    <text evidence="2">Ubiquitinated, leading to its proteasomal degradation.</text>
</comment>
<comment type="PTM">
    <text evidence="2">O-glycosylated; contains O-GlcNAc. O-glycosylation by OGT prevents protein degradation by inhibiting ubiquitination. It also stabilizes the CLOCK-BMAL1 heterodimer thereby increasing CLOCK-BMAL1-mediated transcriptional activation of PER1/2/3 and CRY1/2.</text>
</comment>
<comment type="PTM">
    <text evidence="2">Phosphorylation is dependent on the CLOCK-BMAL1 heterodimer formation. Phosphorylation enhances the transcriptional activity, alters the subcellular localization and decreases the stability of the heterodimer by promoting its degradation.</text>
</comment>
<comment type="PTM">
    <text evidence="2">Sumoylation enhances its transcriptional activity and interaction with ESR1, resulting in up-regulation of ESR1 activity. Estrogen stimulates sumoylation. Desumoylation by SENP1 negatively regulates its transcriptional activity.</text>
</comment>
<comment type="PTM">
    <text evidence="2">Undergoes lysosome-mediated degradation in a time-dependent manner in the liver.</text>
</comment>
<gene>
    <name type="primary">CLOCK</name>
</gene>
<feature type="chain" id="PRO_0000262643" description="Circadian locomoter output cycles protein kaput">
    <location>
        <begin position="1"/>
        <end position="851"/>
    </location>
</feature>
<feature type="domain" description="bHLH" evidence="5">
    <location>
        <begin position="34"/>
        <end position="84"/>
    </location>
</feature>
<feature type="domain" description="PAS 1" evidence="4">
    <location>
        <begin position="107"/>
        <end position="177"/>
    </location>
</feature>
<feature type="domain" description="PAS 2" evidence="4">
    <location>
        <begin position="262"/>
        <end position="332"/>
    </location>
</feature>
<feature type="domain" description="PAC">
    <location>
        <begin position="336"/>
        <end position="379"/>
    </location>
</feature>
<feature type="region of interest" description="Disordered" evidence="6">
    <location>
        <begin position="420"/>
        <end position="508"/>
    </location>
</feature>
<feature type="region of interest" description="Implicated in the circadian rhythmicity" evidence="1">
    <location>
        <begin position="516"/>
        <end position="566"/>
    </location>
</feature>
<feature type="region of interest" description="Disordered" evidence="6">
    <location>
        <begin position="627"/>
        <end position="655"/>
    </location>
</feature>
<feature type="region of interest" description="Disordered" evidence="6">
    <location>
        <begin position="817"/>
        <end position="851"/>
    </location>
</feature>
<feature type="short sequence motif" description="Nuclear localization signal" evidence="2">
    <location>
        <begin position="32"/>
        <end position="47"/>
    </location>
</feature>
<feature type="compositionally biased region" description="Polar residues" evidence="6">
    <location>
        <begin position="447"/>
        <end position="468"/>
    </location>
</feature>
<feature type="compositionally biased region" description="Low complexity" evidence="6">
    <location>
        <begin position="476"/>
        <end position="490"/>
    </location>
</feature>
<feature type="compositionally biased region" description="Polar residues" evidence="6">
    <location>
        <begin position="495"/>
        <end position="508"/>
    </location>
</feature>
<feature type="compositionally biased region" description="Low complexity" evidence="6">
    <location>
        <begin position="817"/>
        <end position="833"/>
    </location>
</feature>
<feature type="site" description="Interaction with E-box DNA" evidence="3">
    <location>
        <position position="39"/>
    </location>
</feature>
<feature type="site" description="Interaction with E-box DNA" evidence="3">
    <location>
        <position position="43"/>
    </location>
</feature>
<feature type="site" description="Interaction with E-box DNA" evidence="3">
    <location>
        <position position="47"/>
    </location>
</feature>
<feature type="site" description="Important for interaction with BMAL1" evidence="3">
    <location>
        <position position="84"/>
    </location>
</feature>
<feature type="modified residue" description="Phosphoserine" evidence="2">
    <location>
        <position position="38"/>
    </location>
</feature>
<feature type="modified residue" description="Phosphoserine" evidence="2">
    <location>
        <position position="42"/>
    </location>
</feature>
<feature type="modified residue" description="Phosphoserine" evidence="2">
    <location>
        <position position="408"/>
    </location>
</feature>
<feature type="modified residue" description="Phosphoserine; by GSK3-beta" evidence="2">
    <location>
        <position position="427"/>
    </location>
</feature>
<feature type="modified residue" description="Phosphothreonine; by CDK5" evidence="2">
    <location>
        <position position="451"/>
    </location>
</feature>
<feature type="modified residue" description="Phosphothreonine; by CDK5" evidence="2">
    <location>
        <position position="461"/>
    </location>
</feature>
<feature type="cross-link" description="Glycyl lysine isopeptide (Lys-Gly) (interchain with G-Cter in SUMO1)" evidence="2">
    <location>
        <position position="67"/>
    </location>
</feature>
<feature type="cross-link" description="Glycyl lysine isopeptide (Lys-Gly) (interchain with G-Cter in SUMO1)" evidence="2">
    <location>
        <position position="847"/>
    </location>
</feature>
<name>CLOCK_TYTAL</name>
<accession>Q6YGZ4</accession>
<dbReference type="EMBL" id="AY150850">
    <property type="protein sequence ID" value="AAO06119.1"/>
    <property type="molecule type" value="mRNA"/>
</dbReference>
<dbReference type="SMR" id="Q6YGZ4"/>
<dbReference type="GO" id="GO:1990513">
    <property type="term" value="C:CLOCK-BMAL transcription complex"/>
    <property type="evidence" value="ECO:0007669"/>
    <property type="project" value="TreeGrafter"/>
</dbReference>
<dbReference type="GO" id="GO:0005829">
    <property type="term" value="C:cytosol"/>
    <property type="evidence" value="ECO:0000250"/>
    <property type="project" value="UniProtKB"/>
</dbReference>
<dbReference type="GO" id="GO:0005634">
    <property type="term" value="C:nucleus"/>
    <property type="evidence" value="ECO:0000250"/>
    <property type="project" value="UniProtKB"/>
</dbReference>
<dbReference type="GO" id="GO:0003677">
    <property type="term" value="F:DNA binding"/>
    <property type="evidence" value="ECO:0000250"/>
    <property type="project" value="UniProtKB"/>
</dbReference>
<dbReference type="GO" id="GO:0000981">
    <property type="term" value="F:DNA-binding transcription factor activity, RNA polymerase II-specific"/>
    <property type="evidence" value="ECO:0007669"/>
    <property type="project" value="InterPro"/>
</dbReference>
<dbReference type="GO" id="GO:0070888">
    <property type="term" value="F:E-box binding"/>
    <property type="evidence" value="ECO:0007669"/>
    <property type="project" value="TreeGrafter"/>
</dbReference>
<dbReference type="GO" id="GO:0046983">
    <property type="term" value="F:protein dimerization activity"/>
    <property type="evidence" value="ECO:0007669"/>
    <property type="project" value="InterPro"/>
</dbReference>
<dbReference type="GO" id="GO:0032922">
    <property type="term" value="P:circadian regulation of gene expression"/>
    <property type="evidence" value="ECO:0007669"/>
    <property type="project" value="InterPro"/>
</dbReference>
<dbReference type="GO" id="GO:0006974">
    <property type="term" value="P:DNA damage response"/>
    <property type="evidence" value="ECO:0007669"/>
    <property type="project" value="UniProtKB-KW"/>
</dbReference>
<dbReference type="GO" id="GO:0006473">
    <property type="term" value="P:protein acetylation"/>
    <property type="evidence" value="ECO:0000250"/>
    <property type="project" value="UniProtKB"/>
</dbReference>
<dbReference type="GO" id="GO:0051775">
    <property type="term" value="P:response to redox state"/>
    <property type="evidence" value="ECO:0000250"/>
    <property type="project" value="UniProtKB"/>
</dbReference>
<dbReference type="CDD" id="cd19734">
    <property type="entry name" value="bHLH-PAS_CLOCK"/>
    <property type="match status" value="1"/>
</dbReference>
<dbReference type="CDD" id="cd00130">
    <property type="entry name" value="PAS"/>
    <property type="match status" value="2"/>
</dbReference>
<dbReference type="FunFam" id="3.30.450.20:FF:000016">
    <property type="entry name" value="Circadian locomoter output cycles protein"/>
    <property type="match status" value="1"/>
</dbReference>
<dbReference type="FunFam" id="4.10.280.10:FF:000013">
    <property type="entry name" value="Circadian locomoter output cycles protein kaput"/>
    <property type="match status" value="1"/>
</dbReference>
<dbReference type="FunFam" id="3.30.450.20:FF:000022">
    <property type="entry name" value="circadian locomoter output cycles protein kaput"/>
    <property type="match status" value="1"/>
</dbReference>
<dbReference type="Gene3D" id="4.10.280.10">
    <property type="entry name" value="Helix-loop-helix DNA-binding domain"/>
    <property type="match status" value="1"/>
</dbReference>
<dbReference type="Gene3D" id="3.30.450.20">
    <property type="entry name" value="PAS domain"/>
    <property type="match status" value="2"/>
</dbReference>
<dbReference type="InterPro" id="IPR011598">
    <property type="entry name" value="bHLH_dom"/>
</dbReference>
<dbReference type="InterPro" id="IPR047230">
    <property type="entry name" value="CLOCK-like"/>
</dbReference>
<dbReference type="InterPro" id="IPR036638">
    <property type="entry name" value="HLH_DNA-bd_sf"/>
</dbReference>
<dbReference type="InterPro" id="IPR001067">
    <property type="entry name" value="Nuc_translocat"/>
</dbReference>
<dbReference type="InterPro" id="IPR001610">
    <property type="entry name" value="PAC"/>
</dbReference>
<dbReference type="InterPro" id="IPR000014">
    <property type="entry name" value="PAS"/>
</dbReference>
<dbReference type="InterPro" id="IPR035965">
    <property type="entry name" value="PAS-like_dom_sf"/>
</dbReference>
<dbReference type="InterPro" id="IPR013767">
    <property type="entry name" value="PAS_fold"/>
</dbReference>
<dbReference type="PANTHER" id="PTHR46055">
    <property type="entry name" value="CIRCADIAN LOCOMOTER OUTPUT CYCLES PROTEIN KAPUT"/>
    <property type="match status" value="1"/>
</dbReference>
<dbReference type="PANTHER" id="PTHR46055:SF2">
    <property type="entry name" value="CIRCADIAN LOCOMOTER OUTPUT CYCLES PROTEIN KAPUT"/>
    <property type="match status" value="1"/>
</dbReference>
<dbReference type="Pfam" id="PF00010">
    <property type="entry name" value="HLH"/>
    <property type="match status" value="1"/>
</dbReference>
<dbReference type="Pfam" id="PF00989">
    <property type="entry name" value="PAS"/>
    <property type="match status" value="1"/>
</dbReference>
<dbReference type="Pfam" id="PF14598">
    <property type="entry name" value="PAS_11"/>
    <property type="match status" value="1"/>
</dbReference>
<dbReference type="PRINTS" id="PR00785">
    <property type="entry name" value="NCTRNSLOCATR"/>
</dbReference>
<dbReference type="SMART" id="SM00353">
    <property type="entry name" value="HLH"/>
    <property type="match status" value="1"/>
</dbReference>
<dbReference type="SMART" id="SM00086">
    <property type="entry name" value="PAC"/>
    <property type="match status" value="1"/>
</dbReference>
<dbReference type="SMART" id="SM00091">
    <property type="entry name" value="PAS"/>
    <property type="match status" value="2"/>
</dbReference>
<dbReference type="SUPFAM" id="SSF47459">
    <property type="entry name" value="HLH, helix-loop-helix DNA-binding domain"/>
    <property type="match status" value="1"/>
</dbReference>
<dbReference type="SUPFAM" id="SSF55785">
    <property type="entry name" value="PYP-like sensor domain (PAS domain)"/>
    <property type="match status" value="2"/>
</dbReference>
<dbReference type="PROSITE" id="PS50888">
    <property type="entry name" value="BHLH"/>
    <property type="match status" value="1"/>
</dbReference>
<dbReference type="PROSITE" id="PS50112">
    <property type="entry name" value="PAS"/>
    <property type="match status" value="2"/>
</dbReference>
<protein>
    <recommendedName>
        <fullName>Circadian locomoter output cycles protein kaput</fullName>
    </recommendedName>
</protein>
<reference key="1">
    <citation type="journal article" date="2003" name="Comp. Biochem. Physiol.">
        <title>Comparative analysis of avian BMAL1 and CLOCK protein sequences: a search for features associated with owl nocturnal behaviour.</title>
        <authorList>
            <person name="Fidler A.E."/>
            <person name="Gwinner E."/>
        </authorList>
    </citation>
    <scope>NUCLEOTIDE SEQUENCE [MRNA]</scope>
    <source>
        <tissue>Liver</tissue>
    </source>
</reference>
<evidence type="ECO:0000250" key="1"/>
<evidence type="ECO:0000250" key="2">
    <source>
        <dbReference type="UniProtKB" id="O08785"/>
    </source>
</evidence>
<evidence type="ECO:0000250" key="3">
    <source>
        <dbReference type="UniProtKB" id="O15516"/>
    </source>
</evidence>
<evidence type="ECO:0000255" key="4">
    <source>
        <dbReference type="PROSITE-ProRule" id="PRU00140"/>
    </source>
</evidence>
<evidence type="ECO:0000255" key="5">
    <source>
        <dbReference type="PROSITE-ProRule" id="PRU00981"/>
    </source>
</evidence>
<evidence type="ECO:0000256" key="6">
    <source>
        <dbReference type="SAM" id="MobiDB-lite"/>
    </source>
</evidence>
<sequence>MFFTISTHKMSSIADRNDGSIFDGLVEEDDKDKAKRVSRNKSEKKRRDQFNVLIKELGSMLPGNARKMDKSTVLQKSIDFLRKHKEITAQSDASEIRQDWKPTFLSNEEFTQLMLEALDGFFLAIMTDGNIIYVSESITPLLEHLPSDLVDQSVFNFIPEGEHSEIYKILSSHLLESDSLTPEYLKSKNQLEFCCHMLRGTIDPKEQPTYEYVKFIGNFKCLNNVPNSAHNGFEGTIQRSHRPSYEDKVCFVATVRLATPQFIKEMCTVEEPNEEFTSRHSLEWKFLFLDHRAPPIIGYLPFEVLGTSGYDYYHVDDLDNLAKCHEHLMQYGKGKSCYYRFLTKGQQWIWLQTHYYITYHQWNSRPEFIVCTHTVVSYAEVRAERRRELGIEESLPEITGDKSQDSGSDNHINTVSLKEALERFDTSPTPSASSRSSRKSSHTAVSDHSSTPTKMTVDTSTPPRQSLSGHEKTAQRRSSLSSQSLSSQSLGQPVAQPTMSQPSTLQLQSGMSQPVFQFSAQLGAMQHLKDQLEQRTRMIEANIHRQQEELRKIQEQLQIVHGQGLQMFLQQSASGLNFGSVQLASGNSSNVQQLTPINMQGQVVQTNQTQSGMSTGHISAPHMIQQQSLQSTATQHNQQNVLSGHTQQSSLASQSQNTVSAPLYNTMVISQPTTGNVVQVPSSLPQNNNQNAAAVTTFTQDRQIRFSQGQQLVTKLVTAPVACGAVMVPSTMFMGQVVTAYPTFAAQQQQPQTLSITQQQQQSQQDQQQQQLTTAQQPAQQQLTQHPQQFLQTSRLLHGNQSAQLILSAAFPLQQSTFTQSHHQQHQSQQQQQLVRHRTDKMTDPSKAQPQ</sequence>